<reference key="1">
    <citation type="submission" date="2006-12" db="EMBL/GenBank/DDBJ databases">
        <authorList>
            <person name="Fouts D.E."/>
            <person name="Nelson K.E."/>
            <person name="Sebastian Y."/>
        </authorList>
    </citation>
    <scope>NUCLEOTIDE SEQUENCE [LARGE SCALE GENOMIC DNA]</scope>
    <source>
        <strain>81-176</strain>
    </source>
</reference>
<organism>
    <name type="scientific">Campylobacter jejuni subsp. jejuni serotype O:23/36 (strain 81-176)</name>
    <dbReference type="NCBI Taxonomy" id="354242"/>
    <lineage>
        <taxon>Bacteria</taxon>
        <taxon>Pseudomonadati</taxon>
        <taxon>Campylobacterota</taxon>
        <taxon>Epsilonproteobacteria</taxon>
        <taxon>Campylobacterales</taxon>
        <taxon>Campylobacteraceae</taxon>
        <taxon>Campylobacter</taxon>
    </lineage>
</organism>
<name>TRMB_CAMJJ</name>
<accession>A1W0R3</accession>
<comment type="function">
    <text evidence="1">Catalyzes the formation of N(7)-methylguanine at position 46 (m7G46) in tRNA.</text>
</comment>
<comment type="catalytic activity">
    <reaction evidence="1">
        <text>guanosine(46) in tRNA + S-adenosyl-L-methionine = N(7)-methylguanosine(46) in tRNA + S-adenosyl-L-homocysteine</text>
        <dbReference type="Rhea" id="RHEA:42708"/>
        <dbReference type="Rhea" id="RHEA-COMP:10188"/>
        <dbReference type="Rhea" id="RHEA-COMP:10189"/>
        <dbReference type="ChEBI" id="CHEBI:57856"/>
        <dbReference type="ChEBI" id="CHEBI:59789"/>
        <dbReference type="ChEBI" id="CHEBI:74269"/>
        <dbReference type="ChEBI" id="CHEBI:74480"/>
        <dbReference type="EC" id="2.1.1.33"/>
    </reaction>
</comment>
<comment type="pathway">
    <text evidence="1">tRNA modification; N(7)-methylguanine-tRNA biosynthesis.</text>
</comment>
<comment type="similarity">
    <text evidence="1">Belongs to the class I-like SAM-binding methyltransferase superfamily. TrmB family.</text>
</comment>
<evidence type="ECO:0000255" key="1">
    <source>
        <dbReference type="HAMAP-Rule" id="MF_01057"/>
    </source>
</evidence>
<gene>
    <name evidence="1" type="primary">trmB</name>
    <name type="ordered locus">CJJ81176_1294</name>
</gene>
<proteinExistence type="inferred from homology"/>
<dbReference type="EC" id="2.1.1.33" evidence="1"/>
<dbReference type="EMBL" id="CP000538">
    <property type="protein sequence ID" value="EAQ72816.1"/>
    <property type="molecule type" value="Genomic_DNA"/>
</dbReference>
<dbReference type="RefSeq" id="WP_002856145.1">
    <property type="nucleotide sequence ID" value="NC_008787.1"/>
</dbReference>
<dbReference type="SMR" id="A1W0R3"/>
<dbReference type="KEGG" id="cjj:CJJ81176_1294"/>
<dbReference type="eggNOG" id="COG0220">
    <property type="taxonomic scope" value="Bacteria"/>
</dbReference>
<dbReference type="HOGENOM" id="CLU_041532_0_0_7"/>
<dbReference type="UniPathway" id="UPA00989"/>
<dbReference type="Proteomes" id="UP000000646">
    <property type="component" value="Chromosome"/>
</dbReference>
<dbReference type="GO" id="GO:0043527">
    <property type="term" value="C:tRNA methyltransferase complex"/>
    <property type="evidence" value="ECO:0007669"/>
    <property type="project" value="TreeGrafter"/>
</dbReference>
<dbReference type="GO" id="GO:0008176">
    <property type="term" value="F:tRNA (guanine(46)-N7)-methyltransferase activity"/>
    <property type="evidence" value="ECO:0007669"/>
    <property type="project" value="UniProtKB-UniRule"/>
</dbReference>
<dbReference type="Gene3D" id="3.40.50.150">
    <property type="entry name" value="Vaccinia Virus protein VP39"/>
    <property type="match status" value="1"/>
</dbReference>
<dbReference type="HAMAP" id="MF_01057">
    <property type="entry name" value="tRNA_methyltr_TrmB"/>
    <property type="match status" value="1"/>
</dbReference>
<dbReference type="InterPro" id="IPR029063">
    <property type="entry name" value="SAM-dependent_MTases_sf"/>
</dbReference>
<dbReference type="InterPro" id="IPR003358">
    <property type="entry name" value="tRNA_(Gua-N-7)_MeTrfase_Trmb"/>
</dbReference>
<dbReference type="InterPro" id="IPR055361">
    <property type="entry name" value="tRNA_methyltr_TrmB_bact"/>
</dbReference>
<dbReference type="NCBIfam" id="NF010719">
    <property type="entry name" value="PRK14121.1"/>
    <property type="match status" value="1"/>
</dbReference>
<dbReference type="NCBIfam" id="TIGR00091">
    <property type="entry name" value="tRNA (guanosine(46)-N7)-methyltransferase TrmB"/>
    <property type="match status" value="1"/>
</dbReference>
<dbReference type="PANTHER" id="PTHR23417">
    <property type="entry name" value="3-DEOXY-D-MANNO-OCTULOSONIC-ACID TRANSFERASE/TRNA GUANINE-N 7 - -METHYLTRANSFERASE"/>
    <property type="match status" value="1"/>
</dbReference>
<dbReference type="PANTHER" id="PTHR23417:SF14">
    <property type="entry name" value="PENTACOTRIPEPTIDE-REPEAT REGION OF PRORP DOMAIN-CONTAINING PROTEIN"/>
    <property type="match status" value="1"/>
</dbReference>
<dbReference type="Pfam" id="PF02390">
    <property type="entry name" value="Methyltransf_4"/>
    <property type="match status" value="1"/>
</dbReference>
<dbReference type="SUPFAM" id="SSF53335">
    <property type="entry name" value="S-adenosyl-L-methionine-dependent methyltransferases"/>
    <property type="match status" value="1"/>
</dbReference>
<dbReference type="PROSITE" id="PS51625">
    <property type="entry name" value="SAM_MT_TRMB"/>
    <property type="match status" value="1"/>
</dbReference>
<feature type="chain" id="PRO_0000288133" description="tRNA (guanine-N(7)-)-methyltransferase">
    <location>
        <begin position="1"/>
        <end position="392"/>
    </location>
</feature>
<feature type="binding site" evidence="1">
    <location>
        <position position="123"/>
    </location>
    <ligand>
        <name>S-adenosyl-L-methionine</name>
        <dbReference type="ChEBI" id="CHEBI:59789"/>
    </ligand>
</feature>
<feature type="binding site" evidence="1">
    <location>
        <position position="148"/>
    </location>
    <ligand>
        <name>S-adenosyl-L-methionine</name>
        <dbReference type="ChEBI" id="CHEBI:59789"/>
    </ligand>
</feature>
<feature type="binding site" evidence="1">
    <location>
        <position position="175"/>
    </location>
    <ligand>
        <name>S-adenosyl-L-methionine</name>
        <dbReference type="ChEBI" id="CHEBI:59789"/>
    </ligand>
</feature>
<feature type="binding site" evidence="1">
    <location>
        <position position="201"/>
    </location>
    <ligand>
        <name>substrate</name>
    </ligand>
</feature>
<feature type="binding site" evidence="1">
    <location>
        <position position="231"/>
    </location>
    <ligand>
        <name>substrate</name>
    </ligand>
</feature>
<keyword id="KW-0489">Methyltransferase</keyword>
<keyword id="KW-0949">S-adenosyl-L-methionine</keyword>
<keyword id="KW-0808">Transferase</keyword>
<keyword id="KW-0819">tRNA processing</keyword>
<sequence length="392" mass="46215">MPNFKSKKIKEINLPYSKDDVEFLWLAKNDNVSLIYTKVQEESFFLQIKKAQNGFVIKGDKHTKPSKIGYLQKALKIFKEGFCEDIINEAFGLKNNALIEKTPFIVDNFDELLSKLQGKIYIEIGFGSGRHLLYQAKENPNVLILGVEIYNPALTQVAKLAKVQNVNNILLIQSDARLLLSVLKSKSVEKIFLHFPVPWDKKPHRRVIGKDFCKECARVLTQNGRFELRTDSFEYFNFTLEQFLTFPAPKFSLRKNENLEISSKYEDRWKKQEKNIYDLWVWNFNQECKNYELNEFNLSSVEFSKEDLKKIEQNFKNITIKKDDFFLHFESIYKQDENLLLKVAFGAFNKPEHCYLHLDKTIDFVFKEPFKIQENIKAINELKEILKVQFKI</sequence>
<protein>
    <recommendedName>
        <fullName evidence="1">tRNA (guanine-N(7)-)-methyltransferase</fullName>
        <ecNumber evidence="1">2.1.1.33</ecNumber>
    </recommendedName>
    <alternativeName>
        <fullName evidence="1">tRNA (guanine(46)-N(7))-methyltransferase</fullName>
    </alternativeName>
    <alternativeName>
        <fullName evidence="1">tRNA(m7G46)-methyltransferase</fullName>
    </alternativeName>
</protein>